<keyword id="KW-0963">Cytoplasm</keyword>
<keyword id="KW-0328">Glycosyltransferase</keyword>
<keyword id="KW-0660">Purine salvage</keyword>
<keyword id="KW-0808">Transferase</keyword>
<sequence length="192" mass="20884">MELLGQKVKEDGVVIDEKILKVDGFLNHQIDAKLMNEVGRTFYEQFKDKGITKILTIEASGIAPAIMAALHFDVPCLFAKKAKPSTLTDGYYETSIHSFTKNKTSTVIVSKEFLSEEDTVLIIDDFLANGDASLGLYDIAQQANAKTAGIGIVVEKSFQNGHQRLEEAGLTVSSLCKVASLEGNKVTLVGEE</sequence>
<dbReference type="EC" id="2.4.2.22" evidence="1"/>
<dbReference type="EMBL" id="AP009351">
    <property type="protein sequence ID" value="BAF66650.1"/>
    <property type="molecule type" value="Genomic_DNA"/>
</dbReference>
<dbReference type="RefSeq" id="WP_000421410.1">
    <property type="nucleotide sequence ID" value="NZ_JBBIAE010000011.1"/>
</dbReference>
<dbReference type="SMR" id="A6QE68"/>
<dbReference type="GeneID" id="66838694"/>
<dbReference type="KEGG" id="sae:NWMN_0378"/>
<dbReference type="HOGENOM" id="CLU_099015_0_0_9"/>
<dbReference type="UniPathway" id="UPA00602">
    <property type="reaction ID" value="UER00658"/>
</dbReference>
<dbReference type="Proteomes" id="UP000006386">
    <property type="component" value="Chromosome"/>
</dbReference>
<dbReference type="GO" id="GO:0005737">
    <property type="term" value="C:cytoplasm"/>
    <property type="evidence" value="ECO:0007669"/>
    <property type="project" value="UniProtKB-SubCell"/>
</dbReference>
<dbReference type="GO" id="GO:0000310">
    <property type="term" value="F:xanthine phosphoribosyltransferase activity"/>
    <property type="evidence" value="ECO:0007669"/>
    <property type="project" value="UniProtKB-UniRule"/>
</dbReference>
<dbReference type="GO" id="GO:0006166">
    <property type="term" value="P:purine ribonucleoside salvage"/>
    <property type="evidence" value="ECO:0007669"/>
    <property type="project" value="UniProtKB-KW"/>
</dbReference>
<dbReference type="GO" id="GO:0046110">
    <property type="term" value="P:xanthine metabolic process"/>
    <property type="evidence" value="ECO:0007669"/>
    <property type="project" value="InterPro"/>
</dbReference>
<dbReference type="GO" id="GO:0032265">
    <property type="term" value="P:XMP salvage"/>
    <property type="evidence" value="ECO:0007669"/>
    <property type="project" value="UniProtKB-UniRule"/>
</dbReference>
<dbReference type="CDD" id="cd06223">
    <property type="entry name" value="PRTases_typeI"/>
    <property type="match status" value="1"/>
</dbReference>
<dbReference type="Gene3D" id="3.40.50.2020">
    <property type="match status" value="1"/>
</dbReference>
<dbReference type="HAMAP" id="MF_01184">
    <property type="entry name" value="XPRTase"/>
    <property type="match status" value="1"/>
</dbReference>
<dbReference type="InterPro" id="IPR000836">
    <property type="entry name" value="PRibTrfase_dom"/>
</dbReference>
<dbReference type="InterPro" id="IPR029057">
    <property type="entry name" value="PRTase-like"/>
</dbReference>
<dbReference type="InterPro" id="IPR050118">
    <property type="entry name" value="Pur/Pyrimidine_PRTase"/>
</dbReference>
<dbReference type="InterPro" id="IPR010079">
    <property type="entry name" value="Xanthine_PRibTrfase"/>
</dbReference>
<dbReference type="NCBIfam" id="NF006671">
    <property type="entry name" value="PRK09219.1"/>
    <property type="match status" value="1"/>
</dbReference>
<dbReference type="NCBIfam" id="TIGR01744">
    <property type="entry name" value="XPRTase"/>
    <property type="match status" value="1"/>
</dbReference>
<dbReference type="PANTHER" id="PTHR43864">
    <property type="entry name" value="HYPOXANTHINE/GUANINE PHOSPHORIBOSYLTRANSFERASE"/>
    <property type="match status" value="1"/>
</dbReference>
<dbReference type="PANTHER" id="PTHR43864:SF1">
    <property type="entry name" value="XANTHINE PHOSPHORIBOSYLTRANSFERASE"/>
    <property type="match status" value="1"/>
</dbReference>
<dbReference type="SUPFAM" id="SSF53271">
    <property type="entry name" value="PRTase-like"/>
    <property type="match status" value="1"/>
</dbReference>
<organism>
    <name type="scientific">Staphylococcus aureus (strain Newman)</name>
    <dbReference type="NCBI Taxonomy" id="426430"/>
    <lineage>
        <taxon>Bacteria</taxon>
        <taxon>Bacillati</taxon>
        <taxon>Bacillota</taxon>
        <taxon>Bacilli</taxon>
        <taxon>Bacillales</taxon>
        <taxon>Staphylococcaceae</taxon>
        <taxon>Staphylococcus</taxon>
    </lineage>
</organism>
<proteinExistence type="inferred from homology"/>
<feature type="chain" id="PRO_0000339752" description="Xanthine phosphoribosyltransferase">
    <location>
        <begin position="1"/>
        <end position="192"/>
    </location>
</feature>
<feature type="binding site" evidence="1">
    <location>
        <position position="20"/>
    </location>
    <ligand>
        <name>xanthine</name>
        <dbReference type="ChEBI" id="CHEBI:17712"/>
    </ligand>
</feature>
<feature type="binding site" evidence="1">
    <location>
        <position position="27"/>
    </location>
    <ligand>
        <name>xanthine</name>
        <dbReference type="ChEBI" id="CHEBI:17712"/>
    </ligand>
</feature>
<feature type="binding site" evidence="1">
    <location>
        <begin position="128"/>
        <end position="132"/>
    </location>
    <ligand>
        <name>5-phospho-alpha-D-ribose 1-diphosphate</name>
        <dbReference type="ChEBI" id="CHEBI:58017"/>
    </ligand>
</feature>
<feature type="binding site" evidence="1">
    <location>
        <position position="156"/>
    </location>
    <ligand>
        <name>xanthine</name>
        <dbReference type="ChEBI" id="CHEBI:17712"/>
    </ligand>
</feature>
<accession>A6QE68</accession>
<reference key="1">
    <citation type="journal article" date="2008" name="J. Bacteriol.">
        <title>Genome sequence of Staphylococcus aureus strain Newman and comparative analysis of staphylococcal genomes: polymorphism and evolution of two major pathogenicity islands.</title>
        <authorList>
            <person name="Baba T."/>
            <person name="Bae T."/>
            <person name="Schneewind O."/>
            <person name="Takeuchi F."/>
            <person name="Hiramatsu K."/>
        </authorList>
    </citation>
    <scope>NUCLEOTIDE SEQUENCE [LARGE SCALE GENOMIC DNA]</scope>
    <source>
        <strain>Newman</strain>
    </source>
</reference>
<gene>
    <name evidence="1" type="primary">xpt</name>
    <name type="ordered locus">NWMN_0378</name>
</gene>
<protein>
    <recommendedName>
        <fullName evidence="1">Xanthine phosphoribosyltransferase</fullName>
        <shortName evidence="1">XPRTase</shortName>
        <ecNumber evidence="1">2.4.2.22</ecNumber>
    </recommendedName>
</protein>
<comment type="function">
    <text evidence="1">Converts the preformed base xanthine, a product of nucleic acid breakdown, to xanthosine 5'-monophosphate (XMP), so it can be reused for RNA or DNA synthesis.</text>
</comment>
<comment type="catalytic activity">
    <reaction evidence="1">
        <text>XMP + diphosphate = xanthine + 5-phospho-alpha-D-ribose 1-diphosphate</text>
        <dbReference type="Rhea" id="RHEA:10800"/>
        <dbReference type="ChEBI" id="CHEBI:17712"/>
        <dbReference type="ChEBI" id="CHEBI:33019"/>
        <dbReference type="ChEBI" id="CHEBI:57464"/>
        <dbReference type="ChEBI" id="CHEBI:58017"/>
        <dbReference type="EC" id="2.4.2.22"/>
    </reaction>
</comment>
<comment type="pathway">
    <text evidence="1">Purine metabolism; XMP biosynthesis via salvage pathway; XMP from xanthine: step 1/1.</text>
</comment>
<comment type="subunit">
    <text evidence="1">Homodimer.</text>
</comment>
<comment type="subcellular location">
    <subcellularLocation>
        <location evidence="1">Cytoplasm</location>
    </subcellularLocation>
</comment>
<comment type="similarity">
    <text evidence="1">Belongs to the purine/pyrimidine phosphoribosyltransferase family. Xpt subfamily.</text>
</comment>
<evidence type="ECO:0000255" key="1">
    <source>
        <dbReference type="HAMAP-Rule" id="MF_01184"/>
    </source>
</evidence>
<name>XPT_STAAE</name>